<dbReference type="EMBL" id="X58895">
    <property type="protein sequence ID" value="CAA41698.1"/>
    <property type="molecule type" value="Genomic_DNA"/>
</dbReference>
<dbReference type="PIR" id="C56618">
    <property type="entry name" value="S21850"/>
</dbReference>
<dbReference type="SMR" id="P27326"/>
<dbReference type="GO" id="GO:0000786">
    <property type="term" value="C:nucleosome"/>
    <property type="evidence" value="ECO:0007669"/>
    <property type="project" value="UniProtKB-KW"/>
</dbReference>
<dbReference type="GO" id="GO:0005634">
    <property type="term" value="C:nucleus"/>
    <property type="evidence" value="ECO:0007669"/>
    <property type="project" value="UniProtKB-SubCell"/>
</dbReference>
<dbReference type="GO" id="GO:0003677">
    <property type="term" value="F:DNA binding"/>
    <property type="evidence" value="ECO:0007669"/>
    <property type="project" value="UniProtKB-KW"/>
</dbReference>
<dbReference type="GO" id="GO:0046982">
    <property type="term" value="F:protein heterodimerization activity"/>
    <property type="evidence" value="ECO:0007669"/>
    <property type="project" value="InterPro"/>
</dbReference>
<dbReference type="GO" id="GO:0044877">
    <property type="term" value="F:protein-containing complex binding"/>
    <property type="evidence" value="ECO:0000250"/>
    <property type="project" value="UniProtKB"/>
</dbReference>
<dbReference type="GO" id="GO:0030527">
    <property type="term" value="F:structural constituent of chromatin"/>
    <property type="evidence" value="ECO:0007669"/>
    <property type="project" value="InterPro"/>
</dbReference>
<dbReference type="CDD" id="cd22910">
    <property type="entry name" value="HFD_H2B"/>
    <property type="match status" value="1"/>
</dbReference>
<dbReference type="FunFam" id="1.10.20.10:FF:000016">
    <property type="entry name" value="Histone H2B"/>
    <property type="match status" value="1"/>
</dbReference>
<dbReference type="Gene3D" id="1.10.20.10">
    <property type="entry name" value="Histone, subunit A"/>
    <property type="match status" value="1"/>
</dbReference>
<dbReference type="InterPro" id="IPR009072">
    <property type="entry name" value="Histone-fold"/>
</dbReference>
<dbReference type="InterPro" id="IPR007125">
    <property type="entry name" value="Histone_H2A/H2B/H3"/>
</dbReference>
<dbReference type="InterPro" id="IPR000558">
    <property type="entry name" value="Histone_H2B"/>
</dbReference>
<dbReference type="InterPro" id="IPR055333">
    <property type="entry name" value="HISTONE_H2B_site"/>
</dbReference>
<dbReference type="PANTHER" id="PTHR23428">
    <property type="entry name" value="HISTONE H2B"/>
    <property type="match status" value="1"/>
</dbReference>
<dbReference type="Pfam" id="PF00125">
    <property type="entry name" value="Histone"/>
    <property type="match status" value="1"/>
</dbReference>
<dbReference type="PRINTS" id="PR00621">
    <property type="entry name" value="HISTONEH2B"/>
</dbReference>
<dbReference type="SMART" id="SM00427">
    <property type="entry name" value="H2B"/>
    <property type="match status" value="1"/>
</dbReference>
<dbReference type="SUPFAM" id="SSF47113">
    <property type="entry name" value="Histone-fold"/>
    <property type="match status" value="1"/>
</dbReference>
<dbReference type="PROSITE" id="PS00357">
    <property type="entry name" value="HISTONE_H2B"/>
    <property type="match status" value="1"/>
</dbReference>
<proteinExistence type="inferred from homology"/>
<reference key="1">
    <citation type="journal article" date="1992" name="DNA Seq.">
        <title>Nucleotide sequence of the Urechis caupo core histone gene tandem repeat.</title>
        <authorList>
            <person name="Davis F.C."/>
            <person name="Shelton J.C."/>
            <person name="Ingham L.D."/>
        </authorList>
    </citation>
    <scope>NUCLEOTIDE SEQUENCE [GENOMIC DNA]</scope>
    <source>
        <tissue>Sperm</tissue>
    </source>
</reference>
<accession>P27326</accession>
<keyword id="KW-0158">Chromosome</keyword>
<keyword id="KW-0238">DNA-binding</keyword>
<keyword id="KW-0325">Glycoprotein</keyword>
<keyword id="KW-1017">Isopeptide bond</keyword>
<keyword id="KW-0544">Nucleosome core</keyword>
<keyword id="KW-0539">Nucleus</keyword>
<keyword id="KW-0832">Ubl conjugation</keyword>
<feature type="initiator methionine" description="Removed" evidence="1">
    <location>
        <position position="1"/>
    </location>
</feature>
<feature type="chain" id="PRO_0000071874" description="Histone H2B">
    <location>
        <begin position="2"/>
        <end position="123"/>
    </location>
</feature>
<feature type="region of interest" description="Disordered" evidence="2">
    <location>
        <begin position="1"/>
        <end position="32"/>
    </location>
</feature>
<feature type="compositionally biased region" description="Basic residues" evidence="2">
    <location>
        <begin position="9"/>
        <end position="32"/>
    </location>
</feature>
<feature type="glycosylation site" description="O-linked (GlcNAc) serine" evidence="1">
    <location>
        <position position="110"/>
    </location>
</feature>
<feature type="cross-link" description="Glycyl lysine isopeptide (Lys-Gly) (interchain with G-Cter in ubiquitin)" evidence="1">
    <location>
        <position position="118"/>
    </location>
</feature>
<name>H2B_URECA</name>
<sequence>MPPKAASKGAKKAASKAKAARSTDKKKRRRRRESYSIYIYKVLKQVHPDTGISSKAMSIMNSFVNDIFERIAAEASRLAHYNRRSTITSREIQTAVRLLLPGELAKHAVSEGTKAVTKYTQSK</sequence>
<evidence type="ECO:0000250" key="1"/>
<evidence type="ECO:0000256" key="2">
    <source>
        <dbReference type="SAM" id="MobiDB-lite"/>
    </source>
</evidence>
<evidence type="ECO:0000305" key="3"/>
<protein>
    <recommendedName>
        <fullName>Histone H2B</fullName>
    </recommendedName>
</protein>
<organism>
    <name type="scientific">Urechis caupo</name>
    <name type="common">Innkeeper worm</name>
    <name type="synonym">Spoonworm</name>
    <dbReference type="NCBI Taxonomy" id="6431"/>
    <lineage>
        <taxon>Eukaryota</taxon>
        <taxon>Metazoa</taxon>
        <taxon>Spiralia</taxon>
        <taxon>Lophotrochozoa</taxon>
        <taxon>Annelida</taxon>
        <taxon>Polychaeta</taxon>
        <taxon>Echiura</taxon>
        <taxon>Xenopneusta</taxon>
        <taxon>Urechidae</taxon>
        <taxon>Urechis</taxon>
    </lineage>
</organism>
<comment type="function">
    <text>Core component of nucleosome. Nucleosomes wrap and compact DNA into chromatin, limiting DNA accessibility to the cellular machineries which require DNA as a template. Histones thereby play a central role in transcription regulation, DNA repair, DNA replication and chromosomal stability. DNA accessibility is regulated via a complex set of post-translational modifications of histones, also called histone code, and nucleosome remodeling.</text>
</comment>
<comment type="subunit">
    <text>The nucleosome is a histone octamer containing two molecules each of H2A, H2B, H3 and H4 assembled in one H3-H4 heterotetramer and two H2A-H2B heterodimers. The octamer wraps approximately 147 bp of DNA.</text>
</comment>
<comment type="subcellular location">
    <subcellularLocation>
        <location>Nucleus</location>
    </subcellularLocation>
    <subcellularLocation>
        <location>Chromosome</location>
    </subcellularLocation>
</comment>
<comment type="PTM">
    <text evidence="1">Monoubiquitination of Lys-118 gives a specific tag for epigenetic transcriptional activation and is also prerequisite for histone H3 'Lys-4' and 'Lys-79' methylation.</text>
</comment>
<comment type="similarity">
    <text evidence="3">Belongs to the histone H2B family.</text>
</comment>